<sequence>MARKTPLKRYRNIGISAHIDAGKTTTTERVLFYTGVSHKIGEVHDGAATMDWMEQEQERGITITSAATTCFWSGMAKQFDEHRINIIDTPGHVDFTIEVERSMRVLDGACMVYCAVGGVQPQSETVWRQANKYKVPRLAFINKMDRVGADFYRVVEQIKTRLGGKPVPLVIPIGKEDDFEGVVDLVTMKAIYWDEASQGMEYDEREIPAELQEKAEEYREYLVESAAEATEELMNEYLENGELTVDQINSAIRQLTIDNEIIPLLCGTAFKNKGVQKMLDAVIQYLPAPMDVPAIKGILDDKDESEGTREASDEAPFSALAFKIMNDKFVGNLTFVRVYSGVLKQGSSVYNPVKMKRERVGRIVQMMANSQEELQEIRTGDIAALVGMKDVTTGDTLCDEQNVITLERMEFPDPVISLAVEPKTKADQEKMSIALGRLAKEDPSFRVHTDEESGQTIISGMGELHLEILVDRMKREFGVEANIGAPQVAYRETIRNTVEQEGKFVRQTGGRGKFGHVWLRLEPMDPAGDVLYEFKEEVVGGTVPKEFHGAVDKGIQERMKNGVLAGYPIVGVKATLYDGSYHDVDSDELSFKMAGSIAFRKGFMAANPTLLEPVMKVEVETPEDYMGDIMGDLNRRRGMVQGMEDLPGGTKQIRAEVPLAEMFGYATQMRSMSQGRATYSMEFQKYAEIPKSVAEAIISKFNNKDDDE</sequence>
<evidence type="ECO:0000255" key="1">
    <source>
        <dbReference type="HAMAP-Rule" id="MF_00054"/>
    </source>
</evidence>
<keyword id="KW-0963">Cytoplasm</keyword>
<keyword id="KW-0251">Elongation factor</keyword>
<keyword id="KW-0342">GTP-binding</keyword>
<keyword id="KW-0547">Nucleotide-binding</keyword>
<keyword id="KW-0648">Protein biosynthesis</keyword>
<feature type="chain" id="PRO_0000263486" description="Elongation factor G">
    <location>
        <begin position="1"/>
        <end position="708"/>
    </location>
</feature>
<feature type="domain" description="tr-type G">
    <location>
        <begin position="8"/>
        <end position="290"/>
    </location>
</feature>
<feature type="binding site" evidence="1">
    <location>
        <begin position="17"/>
        <end position="24"/>
    </location>
    <ligand>
        <name>GTP</name>
        <dbReference type="ChEBI" id="CHEBI:37565"/>
    </ligand>
</feature>
<feature type="binding site" evidence="1">
    <location>
        <begin position="88"/>
        <end position="92"/>
    </location>
    <ligand>
        <name>GTP</name>
        <dbReference type="ChEBI" id="CHEBI:37565"/>
    </ligand>
</feature>
<feature type="binding site" evidence="1">
    <location>
        <begin position="142"/>
        <end position="145"/>
    </location>
    <ligand>
        <name>GTP</name>
        <dbReference type="ChEBI" id="CHEBI:37565"/>
    </ligand>
</feature>
<name>EFG_PSYCK</name>
<protein>
    <recommendedName>
        <fullName evidence="1">Elongation factor G</fullName>
        <shortName evidence="1">EF-G</shortName>
    </recommendedName>
</protein>
<reference key="1">
    <citation type="submission" date="2006-03" db="EMBL/GenBank/DDBJ databases">
        <title>Complete sequence of chromosome of Psychrobacter cryohalolentis K5.</title>
        <authorList>
            <consortium name="US DOE Joint Genome Institute"/>
            <person name="Copeland A."/>
            <person name="Lucas S."/>
            <person name="Lapidus A."/>
            <person name="Barry K."/>
            <person name="Detter J.C."/>
            <person name="Glavina T."/>
            <person name="Hammon N."/>
            <person name="Israni S."/>
            <person name="Dalin E."/>
            <person name="Tice H."/>
            <person name="Pitluck S."/>
            <person name="Brettin T."/>
            <person name="Bruce D."/>
            <person name="Han C."/>
            <person name="Tapia R."/>
            <person name="Sims D.R."/>
            <person name="Gilna P."/>
            <person name="Schmutz J."/>
            <person name="Larimer F."/>
            <person name="Land M."/>
            <person name="Hauser L."/>
            <person name="Kyrpides N."/>
            <person name="Kim E."/>
            <person name="Richardson P."/>
        </authorList>
    </citation>
    <scope>NUCLEOTIDE SEQUENCE [LARGE SCALE GENOMIC DNA]</scope>
    <source>
        <strain>ATCC BAA-1226 / DSM 17306 / VKM B-2378 / K5</strain>
    </source>
</reference>
<gene>
    <name evidence="1" type="primary">fusA</name>
    <name type="ordered locus">Pcryo_2185</name>
</gene>
<organism>
    <name type="scientific">Psychrobacter cryohalolentis (strain ATCC BAA-1226 / DSM 17306 / VKM B-2378 / K5)</name>
    <dbReference type="NCBI Taxonomy" id="335284"/>
    <lineage>
        <taxon>Bacteria</taxon>
        <taxon>Pseudomonadati</taxon>
        <taxon>Pseudomonadota</taxon>
        <taxon>Gammaproteobacteria</taxon>
        <taxon>Moraxellales</taxon>
        <taxon>Moraxellaceae</taxon>
        <taxon>Psychrobacter</taxon>
    </lineage>
</organism>
<accession>Q1Q8P1</accession>
<proteinExistence type="inferred from homology"/>
<comment type="function">
    <text evidence="1">Catalyzes the GTP-dependent ribosomal translocation step during translation elongation. During this step, the ribosome changes from the pre-translocational (PRE) to the post-translocational (POST) state as the newly formed A-site-bound peptidyl-tRNA and P-site-bound deacylated tRNA move to the P and E sites, respectively. Catalyzes the coordinated movement of the two tRNA molecules, the mRNA and conformational changes in the ribosome.</text>
</comment>
<comment type="subcellular location">
    <subcellularLocation>
        <location evidence="1">Cytoplasm</location>
    </subcellularLocation>
</comment>
<comment type="similarity">
    <text evidence="1">Belongs to the TRAFAC class translation factor GTPase superfamily. Classic translation factor GTPase family. EF-G/EF-2 subfamily.</text>
</comment>
<dbReference type="EMBL" id="CP000323">
    <property type="protein sequence ID" value="ABE75962.1"/>
    <property type="molecule type" value="Genomic_DNA"/>
</dbReference>
<dbReference type="RefSeq" id="WP_011514496.1">
    <property type="nucleotide sequence ID" value="NC_007969.1"/>
</dbReference>
<dbReference type="SMR" id="Q1Q8P1"/>
<dbReference type="STRING" id="335284.Pcryo_2185"/>
<dbReference type="KEGG" id="pcr:Pcryo_2185"/>
<dbReference type="eggNOG" id="COG0480">
    <property type="taxonomic scope" value="Bacteria"/>
</dbReference>
<dbReference type="HOGENOM" id="CLU_002794_4_1_6"/>
<dbReference type="Proteomes" id="UP000002425">
    <property type="component" value="Chromosome"/>
</dbReference>
<dbReference type="GO" id="GO:0005737">
    <property type="term" value="C:cytoplasm"/>
    <property type="evidence" value="ECO:0007669"/>
    <property type="project" value="UniProtKB-SubCell"/>
</dbReference>
<dbReference type="GO" id="GO:0005525">
    <property type="term" value="F:GTP binding"/>
    <property type="evidence" value="ECO:0007669"/>
    <property type="project" value="UniProtKB-UniRule"/>
</dbReference>
<dbReference type="GO" id="GO:0003924">
    <property type="term" value="F:GTPase activity"/>
    <property type="evidence" value="ECO:0007669"/>
    <property type="project" value="InterPro"/>
</dbReference>
<dbReference type="GO" id="GO:0097216">
    <property type="term" value="F:guanosine tetraphosphate binding"/>
    <property type="evidence" value="ECO:0007669"/>
    <property type="project" value="UniProtKB-ARBA"/>
</dbReference>
<dbReference type="GO" id="GO:0003746">
    <property type="term" value="F:translation elongation factor activity"/>
    <property type="evidence" value="ECO:0007669"/>
    <property type="project" value="UniProtKB-UniRule"/>
</dbReference>
<dbReference type="GO" id="GO:0032790">
    <property type="term" value="P:ribosome disassembly"/>
    <property type="evidence" value="ECO:0007669"/>
    <property type="project" value="TreeGrafter"/>
</dbReference>
<dbReference type="CDD" id="cd01886">
    <property type="entry name" value="EF-G"/>
    <property type="match status" value="1"/>
</dbReference>
<dbReference type="CDD" id="cd16262">
    <property type="entry name" value="EFG_III"/>
    <property type="match status" value="1"/>
</dbReference>
<dbReference type="CDD" id="cd01434">
    <property type="entry name" value="EFG_mtEFG1_IV"/>
    <property type="match status" value="1"/>
</dbReference>
<dbReference type="CDD" id="cd03713">
    <property type="entry name" value="EFG_mtEFG_C"/>
    <property type="match status" value="1"/>
</dbReference>
<dbReference type="CDD" id="cd04088">
    <property type="entry name" value="EFG_mtEFG_II"/>
    <property type="match status" value="1"/>
</dbReference>
<dbReference type="FunFam" id="2.40.30.10:FF:000006">
    <property type="entry name" value="Elongation factor G"/>
    <property type="match status" value="1"/>
</dbReference>
<dbReference type="FunFam" id="3.30.230.10:FF:000003">
    <property type="entry name" value="Elongation factor G"/>
    <property type="match status" value="1"/>
</dbReference>
<dbReference type="FunFam" id="3.30.70.240:FF:000001">
    <property type="entry name" value="Elongation factor G"/>
    <property type="match status" value="1"/>
</dbReference>
<dbReference type="FunFam" id="3.30.70.870:FF:000001">
    <property type="entry name" value="Elongation factor G"/>
    <property type="match status" value="1"/>
</dbReference>
<dbReference type="FunFam" id="3.40.50.300:FF:000029">
    <property type="entry name" value="Elongation factor G"/>
    <property type="match status" value="1"/>
</dbReference>
<dbReference type="Gene3D" id="3.30.230.10">
    <property type="match status" value="1"/>
</dbReference>
<dbReference type="Gene3D" id="3.30.70.240">
    <property type="match status" value="1"/>
</dbReference>
<dbReference type="Gene3D" id="3.30.70.870">
    <property type="entry name" value="Elongation Factor G (Translational Gtpase), domain 3"/>
    <property type="match status" value="1"/>
</dbReference>
<dbReference type="Gene3D" id="3.40.50.300">
    <property type="entry name" value="P-loop containing nucleotide triphosphate hydrolases"/>
    <property type="match status" value="1"/>
</dbReference>
<dbReference type="Gene3D" id="2.40.30.10">
    <property type="entry name" value="Translation factors"/>
    <property type="match status" value="1"/>
</dbReference>
<dbReference type="HAMAP" id="MF_00054_B">
    <property type="entry name" value="EF_G_EF_2_B"/>
    <property type="match status" value="1"/>
</dbReference>
<dbReference type="InterPro" id="IPR053905">
    <property type="entry name" value="EF-G-like_DII"/>
</dbReference>
<dbReference type="InterPro" id="IPR041095">
    <property type="entry name" value="EFG_II"/>
</dbReference>
<dbReference type="InterPro" id="IPR009022">
    <property type="entry name" value="EFG_III"/>
</dbReference>
<dbReference type="InterPro" id="IPR035647">
    <property type="entry name" value="EFG_III/V"/>
</dbReference>
<dbReference type="InterPro" id="IPR047872">
    <property type="entry name" value="EFG_IV"/>
</dbReference>
<dbReference type="InterPro" id="IPR035649">
    <property type="entry name" value="EFG_V"/>
</dbReference>
<dbReference type="InterPro" id="IPR000640">
    <property type="entry name" value="EFG_V-like"/>
</dbReference>
<dbReference type="InterPro" id="IPR031157">
    <property type="entry name" value="G_TR_CS"/>
</dbReference>
<dbReference type="InterPro" id="IPR027417">
    <property type="entry name" value="P-loop_NTPase"/>
</dbReference>
<dbReference type="InterPro" id="IPR020568">
    <property type="entry name" value="Ribosomal_Su5_D2-typ_SF"/>
</dbReference>
<dbReference type="InterPro" id="IPR014721">
    <property type="entry name" value="Ribsml_uS5_D2-typ_fold_subgr"/>
</dbReference>
<dbReference type="InterPro" id="IPR005225">
    <property type="entry name" value="Small_GTP-bd"/>
</dbReference>
<dbReference type="InterPro" id="IPR000795">
    <property type="entry name" value="T_Tr_GTP-bd_dom"/>
</dbReference>
<dbReference type="InterPro" id="IPR009000">
    <property type="entry name" value="Transl_B-barrel_sf"/>
</dbReference>
<dbReference type="InterPro" id="IPR004540">
    <property type="entry name" value="Transl_elong_EFG/EF2"/>
</dbReference>
<dbReference type="InterPro" id="IPR005517">
    <property type="entry name" value="Transl_elong_EFG/EF2_IV"/>
</dbReference>
<dbReference type="NCBIfam" id="TIGR00484">
    <property type="entry name" value="EF-G"/>
    <property type="match status" value="1"/>
</dbReference>
<dbReference type="NCBIfam" id="NF009381">
    <property type="entry name" value="PRK12740.1-5"/>
    <property type="match status" value="1"/>
</dbReference>
<dbReference type="NCBIfam" id="TIGR00231">
    <property type="entry name" value="small_GTP"/>
    <property type="match status" value="1"/>
</dbReference>
<dbReference type="PANTHER" id="PTHR43261:SF1">
    <property type="entry name" value="RIBOSOME-RELEASING FACTOR 2, MITOCHONDRIAL"/>
    <property type="match status" value="1"/>
</dbReference>
<dbReference type="PANTHER" id="PTHR43261">
    <property type="entry name" value="TRANSLATION ELONGATION FACTOR G-RELATED"/>
    <property type="match status" value="1"/>
</dbReference>
<dbReference type="Pfam" id="PF22042">
    <property type="entry name" value="EF-G_D2"/>
    <property type="match status" value="1"/>
</dbReference>
<dbReference type="Pfam" id="PF00679">
    <property type="entry name" value="EFG_C"/>
    <property type="match status" value="1"/>
</dbReference>
<dbReference type="Pfam" id="PF14492">
    <property type="entry name" value="EFG_III"/>
    <property type="match status" value="1"/>
</dbReference>
<dbReference type="Pfam" id="PF03764">
    <property type="entry name" value="EFG_IV"/>
    <property type="match status" value="1"/>
</dbReference>
<dbReference type="Pfam" id="PF00009">
    <property type="entry name" value="GTP_EFTU"/>
    <property type="match status" value="1"/>
</dbReference>
<dbReference type="PRINTS" id="PR00315">
    <property type="entry name" value="ELONGATNFCT"/>
</dbReference>
<dbReference type="SMART" id="SM00838">
    <property type="entry name" value="EFG_C"/>
    <property type="match status" value="1"/>
</dbReference>
<dbReference type="SMART" id="SM00889">
    <property type="entry name" value="EFG_IV"/>
    <property type="match status" value="1"/>
</dbReference>
<dbReference type="SUPFAM" id="SSF54980">
    <property type="entry name" value="EF-G C-terminal domain-like"/>
    <property type="match status" value="2"/>
</dbReference>
<dbReference type="SUPFAM" id="SSF52540">
    <property type="entry name" value="P-loop containing nucleoside triphosphate hydrolases"/>
    <property type="match status" value="1"/>
</dbReference>
<dbReference type="SUPFAM" id="SSF54211">
    <property type="entry name" value="Ribosomal protein S5 domain 2-like"/>
    <property type="match status" value="1"/>
</dbReference>
<dbReference type="SUPFAM" id="SSF50447">
    <property type="entry name" value="Translation proteins"/>
    <property type="match status" value="1"/>
</dbReference>
<dbReference type="PROSITE" id="PS00301">
    <property type="entry name" value="G_TR_1"/>
    <property type="match status" value="1"/>
</dbReference>
<dbReference type="PROSITE" id="PS51722">
    <property type="entry name" value="G_TR_2"/>
    <property type="match status" value="1"/>
</dbReference>